<keyword id="KW-0046">Antibiotic resistance</keyword>
<keyword id="KW-0196">Cycloheximide resistance</keyword>
<keyword id="KW-1185">Reference proteome</keyword>
<keyword id="KW-0687">Ribonucleoprotein</keyword>
<keyword id="KW-0689">Ribosomal protein</keyword>
<name>RL44_WICCF</name>
<feature type="initiator methionine" description="Removed" evidence="1">
    <location>
        <position position="1"/>
    </location>
</feature>
<feature type="chain" id="PRO_0000149142" description="Large ribosomal subunit protein eL42">
    <location>
        <begin position="2"/>
        <end position="106"/>
    </location>
</feature>
<protein>
    <recommendedName>
        <fullName evidence="2">Large ribosomal subunit protein eL42</fullName>
    </recommendedName>
    <alternativeName>
        <fullName>60S ribosomal protein L41</fullName>
    </alternativeName>
    <alternativeName>
        <fullName>60S ribosomal protein L44</fullName>
    </alternativeName>
</protein>
<accession>Q9UVB8</accession>
<accession>K0KL10</accession>
<sequence>MVNVPKTRKTYCKGKECRKHTQHKVTQYKAGKASLFAQGKRRYDRKQSGYGGQTKPVFHKKAKTTKKVVLRLECVVCKTKAQLSLKRCKHFELGGDRKQKGQALQF</sequence>
<comment type="miscellaneous">
    <text evidence="1">Confers resistance to cycloheximide, an inhibitor of polypeptide elongation.</text>
</comment>
<comment type="similarity">
    <text evidence="2">Belongs to the eukaryotic ribosomal protein eL42 family.</text>
</comment>
<comment type="sequence caution" evidence="2">
    <conflict type="erroneous gene model prediction">
        <sequence resource="EMBL-CDS" id="CCH45920"/>
    </conflict>
</comment>
<gene>
    <name type="primary">RPL44</name>
    <name type="synonym">CYH2</name>
    <name type="ORF">BN7_5507</name>
</gene>
<reference key="1">
    <citation type="submission" date="1998-03" db="EMBL/GenBank/DDBJ databases">
        <title>Cloning and characterization of a gene coding for ribosomal protein L41 of Pichia ciferrii.</title>
        <authorList>
            <person name="Bae J.-H."/>
            <person name="Sohn J.-H."/>
            <person name="Choi E.-S."/>
            <person name="Park J.-S."/>
            <person name="Rhee S.-K."/>
        </authorList>
    </citation>
    <scope>NUCLEOTIDE SEQUENCE [GENOMIC DNA]</scope>
    <source>
        <strain>ATCC 14091 / BCRC 22168 / CBS 111 / JCM 3599 / NBRC 0793 / NRRL Y-1031 F-60-10</strain>
    </source>
</reference>
<reference key="2">
    <citation type="journal article" date="2012" name="Eukaryot. Cell">
        <title>Draft genome sequence of Wickerhamomyces ciferrii NRRL Y-1031 F-60-10.</title>
        <authorList>
            <person name="Schneider J."/>
            <person name="Andrea H."/>
            <person name="Blom J."/>
            <person name="Jaenicke S."/>
            <person name="Rueckert C."/>
            <person name="Schorsch C."/>
            <person name="Szczepanowski R."/>
            <person name="Farwick M."/>
            <person name="Goesmann A."/>
            <person name="Puehler A."/>
            <person name="Schaffer S."/>
            <person name="Tauch A."/>
            <person name="Koehler T."/>
            <person name="Brinkrolf K."/>
        </authorList>
    </citation>
    <scope>NUCLEOTIDE SEQUENCE [LARGE SCALE GENOMIC DNA]</scope>
    <source>
        <strain>ATCC 14091 / BCRC 22168 / CBS 111 / JCM 3599 / NBRC 0793 / NRRL Y-1031 F-60-10</strain>
    </source>
</reference>
<organism>
    <name type="scientific">Wickerhamomyces ciferrii (strain ATCC 14091 / BCRC 22168 / CBS 111 / JCM 3599 / NBRC 0793 / NRRL Y-1031 F-60-10)</name>
    <name type="common">Yeast</name>
    <name type="synonym">Pichia ciferrii</name>
    <dbReference type="NCBI Taxonomy" id="1206466"/>
    <lineage>
        <taxon>Eukaryota</taxon>
        <taxon>Fungi</taxon>
        <taxon>Dikarya</taxon>
        <taxon>Ascomycota</taxon>
        <taxon>Saccharomycotina</taxon>
        <taxon>Saccharomycetes</taxon>
        <taxon>Phaffomycetales</taxon>
        <taxon>Wickerhamomycetaceae</taxon>
        <taxon>Wickerhamomyces</taxon>
    </lineage>
</organism>
<proteinExistence type="inferred from homology"/>
<dbReference type="EMBL" id="AF053457">
    <property type="protein sequence ID" value="AAF21253.1"/>
    <property type="molecule type" value="Genomic_DNA"/>
</dbReference>
<dbReference type="EMBL" id="CAIF01000217">
    <property type="protein sequence ID" value="CCH45920.1"/>
    <property type="status" value="ALT_SEQ"/>
    <property type="molecule type" value="Genomic_DNA"/>
</dbReference>
<dbReference type="SMR" id="Q9UVB8"/>
<dbReference type="FunCoup" id="Q9UVB8">
    <property type="interactions" value="705"/>
</dbReference>
<dbReference type="STRING" id="1206466.Q9UVB8"/>
<dbReference type="eggNOG" id="KOG3464">
    <property type="taxonomic scope" value="Eukaryota"/>
</dbReference>
<dbReference type="HOGENOM" id="CLU_114645_1_1_1"/>
<dbReference type="InParanoid" id="Q9UVB8"/>
<dbReference type="Proteomes" id="UP000009328">
    <property type="component" value="Unassembled WGS sequence"/>
</dbReference>
<dbReference type="GO" id="GO:1990904">
    <property type="term" value="C:ribonucleoprotein complex"/>
    <property type="evidence" value="ECO:0007669"/>
    <property type="project" value="UniProtKB-KW"/>
</dbReference>
<dbReference type="GO" id="GO:0005840">
    <property type="term" value="C:ribosome"/>
    <property type="evidence" value="ECO:0007669"/>
    <property type="project" value="UniProtKB-KW"/>
</dbReference>
<dbReference type="GO" id="GO:0003735">
    <property type="term" value="F:structural constituent of ribosome"/>
    <property type="evidence" value="ECO:0007669"/>
    <property type="project" value="InterPro"/>
</dbReference>
<dbReference type="GO" id="GO:0046677">
    <property type="term" value="P:response to antibiotic"/>
    <property type="evidence" value="ECO:0007669"/>
    <property type="project" value="UniProtKB-KW"/>
</dbReference>
<dbReference type="GO" id="GO:0046898">
    <property type="term" value="P:response to cycloheximide"/>
    <property type="evidence" value="ECO:0007669"/>
    <property type="project" value="UniProtKB-KW"/>
</dbReference>
<dbReference type="GO" id="GO:0006412">
    <property type="term" value="P:translation"/>
    <property type="evidence" value="ECO:0007669"/>
    <property type="project" value="InterPro"/>
</dbReference>
<dbReference type="FunFam" id="3.10.450.80:FF:000001">
    <property type="entry name" value="60S ribosomal protein L44"/>
    <property type="match status" value="1"/>
</dbReference>
<dbReference type="Gene3D" id="3.10.450.80">
    <property type="match status" value="1"/>
</dbReference>
<dbReference type="InterPro" id="IPR000552">
    <property type="entry name" value="Ribosomal_eL44"/>
</dbReference>
<dbReference type="InterPro" id="IPR053708">
    <property type="entry name" value="Ribosomal_LSU_eL42"/>
</dbReference>
<dbReference type="InterPro" id="IPR011332">
    <property type="entry name" value="Ribosomal_zn-bd"/>
</dbReference>
<dbReference type="PANTHER" id="PTHR10369">
    <property type="entry name" value="60S RIBOSOMAL PROTEIN L36A/L44"/>
    <property type="match status" value="1"/>
</dbReference>
<dbReference type="Pfam" id="PF00935">
    <property type="entry name" value="Ribosomal_L44"/>
    <property type="match status" value="1"/>
</dbReference>
<dbReference type="SUPFAM" id="SSF57829">
    <property type="entry name" value="Zn-binding ribosomal proteins"/>
    <property type="match status" value="1"/>
</dbReference>
<dbReference type="PROSITE" id="PS01172">
    <property type="entry name" value="RIBOSOMAL_L44E"/>
    <property type="match status" value="1"/>
</dbReference>
<evidence type="ECO:0000250" key="1"/>
<evidence type="ECO:0000305" key="2"/>